<proteinExistence type="predicted"/>
<accession>P55658</accession>
<gene>
    <name type="ordered locus">NGR_a01550</name>
    <name type="ORF">y4tD</name>
</gene>
<feature type="chain" id="PRO_0000111751" description="Uncharacterized HTH-type transcriptional regulator y4tD">
    <location>
        <begin position="1"/>
        <end position="169"/>
    </location>
</feature>
<feature type="domain" description="HTH asnC-type" evidence="1">
    <location>
        <begin position="18"/>
        <end position="79"/>
    </location>
</feature>
<feature type="DNA-binding region" description="H-T-H motif" evidence="1">
    <location>
        <begin position="37"/>
        <end position="56"/>
    </location>
</feature>
<name>Y4TD_SINFN</name>
<geneLocation type="plasmid">
    <name>sym pNGR234a</name>
</geneLocation>
<reference key="1">
    <citation type="journal article" date="1997" name="Nature">
        <title>Molecular basis of symbiosis between Rhizobium and legumes.</title>
        <authorList>
            <person name="Freiberg C.A."/>
            <person name="Fellay R."/>
            <person name="Bairoch A."/>
            <person name="Broughton W.J."/>
            <person name="Rosenthal A."/>
            <person name="Perret X."/>
        </authorList>
    </citation>
    <scope>NUCLEOTIDE SEQUENCE [LARGE SCALE GENOMIC DNA]</scope>
    <source>
        <strain>NBRC 101917 / NGR234</strain>
    </source>
</reference>
<reference key="2">
    <citation type="journal article" date="2009" name="Appl. Environ. Microbiol.">
        <title>Rhizobium sp. strain NGR234 possesses a remarkable number of secretion systems.</title>
        <authorList>
            <person name="Schmeisser C."/>
            <person name="Liesegang H."/>
            <person name="Krysciak D."/>
            <person name="Bakkou N."/>
            <person name="Le Quere A."/>
            <person name="Wollherr A."/>
            <person name="Heinemeyer I."/>
            <person name="Morgenstern B."/>
            <person name="Pommerening-Roeser A."/>
            <person name="Flores M."/>
            <person name="Palacios R."/>
            <person name="Brenner S."/>
            <person name="Gottschalk G."/>
            <person name="Schmitz R.A."/>
            <person name="Broughton W.J."/>
            <person name="Perret X."/>
            <person name="Strittmatter A.W."/>
            <person name="Streit W.R."/>
        </authorList>
    </citation>
    <scope>NUCLEOTIDE SEQUENCE [LARGE SCALE GENOMIC DNA]</scope>
    <source>
        <strain>NBRC 101917 / NGR234</strain>
    </source>
</reference>
<evidence type="ECO:0000255" key="1">
    <source>
        <dbReference type="PROSITE-ProRule" id="PRU00319"/>
    </source>
</evidence>
<keyword id="KW-0238">DNA-binding</keyword>
<keyword id="KW-0614">Plasmid</keyword>
<keyword id="KW-1185">Reference proteome</keyword>
<keyword id="KW-0804">Transcription</keyword>
<keyword id="KW-0805">Transcription regulation</keyword>
<organism>
    <name type="scientific">Sinorhizobium fredii (strain NBRC 101917 / NGR234)</name>
    <dbReference type="NCBI Taxonomy" id="394"/>
    <lineage>
        <taxon>Bacteria</taxon>
        <taxon>Pseudomonadati</taxon>
        <taxon>Pseudomonadota</taxon>
        <taxon>Alphaproteobacteria</taxon>
        <taxon>Hyphomicrobiales</taxon>
        <taxon>Rhizobiaceae</taxon>
        <taxon>Sinorhizobium/Ensifer group</taxon>
        <taxon>Sinorhizobium</taxon>
    </lineage>
</organism>
<dbReference type="EMBL" id="U00090">
    <property type="protein sequence ID" value="AAB91857.1"/>
    <property type="molecule type" value="Genomic_DNA"/>
</dbReference>
<dbReference type="RefSeq" id="NP_444070.1">
    <property type="nucleotide sequence ID" value="NC_000914.2"/>
</dbReference>
<dbReference type="SMR" id="P55658"/>
<dbReference type="KEGG" id="rhi:NGR_a01550"/>
<dbReference type="PATRIC" id="fig|394.7.peg.142"/>
<dbReference type="eggNOG" id="COG1522">
    <property type="taxonomic scope" value="Bacteria"/>
</dbReference>
<dbReference type="HOGENOM" id="CLU_091233_0_1_5"/>
<dbReference type="OrthoDB" id="7856348at2"/>
<dbReference type="Proteomes" id="UP000001054">
    <property type="component" value="Plasmid pNGR234a"/>
</dbReference>
<dbReference type="GO" id="GO:0005829">
    <property type="term" value="C:cytosol"/>
    <property type="evidence" value="ECO:0007669"/>
    <property type="project" value="TreeGrafter"/>
</dbReference>
<dbReference type="GO" id="GO:0043565">
    <property type="term" value="F:sequence-specific DNA binding"/>
    <property type="evidence" value="ECO:0007669"/>
    <property type="project" value="InterPro"/>
</dbReference>
<dbReference type="GO" id="GO:0043200">
    <property type="term" value="P:response to amino acid"/>
    <property type="evidence" value="ECO:0007669"/>
    <property type="project" value="TreeGrafter"/>
</dbReference>
<dbReference type="CDD" id="cd00090">
    <property type="entry name" value="HTH_ARSR"/>
    <property type="match status" value="1"/>
</dbReference>
<dbReference type="Gene3D" id="3.30.70.920">
    <property type="match status" value="1"/>
</dbReference>
<dbReference type="Gene3D" id="1.10.10.10">
    <property type="entry name" value="Winged helix-like DNA-binding domain superfamily/Winged helix DNA-binding domain"/>
    <property type="match status" value="1"/>
</dbReference>
<dbReference type="InterPro" id="IPR011991">
    <property type="entry name" value="ArsR-like_HTH"/>
</dbReference>
<dbReference type="InterPro" id="IPR000485">
    <property type="entry name" value="AsnC-type_HTH_dom"/>
</dbReference>
<dbReference type="InterPro" id="IPR011008">
    <property type="entry name" value="Dimeric_a/b-barrel"/>
</dbReference>
<dbReference type="InterPro" id="IPR019888">
    <property type="entry name" value="Tscrpt_reg_AsnC-like"/>
</dbReference>
<dbReference type="InterPro" id="IPR019887">
    <property type="entry name" value="Tscrpt_reg_AsnC/Lrp_C"/>
</dbReference>
<dbReference type="InterPro" id="IPR019885">
    <property type="entry name" value="Tscrpt_reg_HTH_AsnC-type_CS"/>
</dbReference>
<dbReference type="InterPro" id="IPR036388">
    <property type="entry name" value="WH-like_DNA-bd_sf"/>
</dbReference>
<dbReference type="InterPro" id="IPR036390">
    <property type="entry name" value="WH_DNA-bd_sf"/>
</dbReference>
<dbReference type="PANTHER" id="PTHR30154">
    <property type="entry name" value="LEUCINE-RESPONSIVE REGULATORY PROTEIN"/>
    <property type="match status" value="1"/>
</dbReference>
<dbReference type="PANTHER" id="PTHR30154:SF34">
    <property type="entry name" value="TRANSCRIPTIONAL REGULATOR AZLB"/>
    <property type="match status" value="1"/>
</dbReference>
<dbReference type="Pfam" id="PF01037">
    <property type="entry name" value="AsnC_trans_reg"/>
    <property type="match status" value="1"/>
</dbReference>
<dbReference type="Pfam" id="PF13412">
    <property type="entry name" value="HTH_24"/>
    <property type="match status" value="1"/>
</dbReference>
<dbReference type="PRINTS" id="PR00033">
    <property type="entry name" value="HTHASNC"/>
</dbReference>
<dbReference type="SMART" id="SM00344">
    <property type="entry name" value="HTH_ASNC"/>
    <property type="match status" value="1"/>
</dbReference>
<dbReference type="SUPFAM" id="SSF54909">
    <property type="entry name" value="Dimeric alpha+beta barrel"/>
    <property type="match status" value="1"/>
</dbReference>
<dbReference type="SUPFAM" id="SSF46785">
    <property type="entry name" value="Winged helix' DNA-binding domain"/>
    <property type="match status" value="1"/>
</dbReference>
<dbReference type="PROSITE" id="PS00519">
    <property type="entry name" value="HTH_ASNC_1"/>
    <property type="match status" value="1"/>
</dbReference>
<dbReference type="PROSITE" id="PS50956">
    <property type="entry name" value="HTH_ASNC_2"/>
    <property type="match status" value="1"/>
</dbReference>
<sequence>MQDVCNSQEILQDYAMELDRADVALLNAVQKNNRLTSEELADKVGLSPTACQRRLKRLRSLGVIEADVSIVSPKAVGRPVTMIVMVSLERERADIVDRFKSSIRNTREVMIGYYVTGDADFILIVTAKDMEEYEEFTRRFFYENHDIKGFKTMVVMDRVKATFAVPIEI</sequence>
<protein>
    <recommendedName>
        <fullName>Uncharacterized HTH-type transcriptional regulator y4tD</fullName>
    </recommendedName>
</protein>